<accession>A9R5L9</accession>
<proteinExistence type="inferred from homology"/>
<sequence>MAVLTHGSPTPSGAHFDGKGINFTLFSAHAEQVTLCLFDEQGQERQIAMPARTGDIWHGYLPGGKPGQRYGYRVSGPFEPSRGHRFNPHKLLIDPRTRALEGKVGDDPRFTGGVSQPDVRDSAAALPKCLVIHEEYDWQGDKPPAIPWGNTVIYEAHVRGLTQLHPDIPPELRGTYAALAHPALIEHLKTLGITTLELLPVQFHIDEPRLQKMGLSNYWGYNVLAPFAVDPDYASGREGISPLRELRDAVKALHNAGIEVILDVVFNHSAELDVFGPTLCQRGIDNASYYWLTPDGEYDNITGCGNALRLSHPYVTQWVIDCLNYWRDSCHVDGFRFDLGTVLGRTPAFDQHAPLFAALAADERLSACKLIAEPWDIGLGGYQLGNFPTGFSEWNDQYRDAMRGFWLRGEVPRGTFAQHFAASSSLFEQRGRLPSASINQITAHDGFTLLDLLCFNQKHNQMNGEENRDGSDNNHSNNFGCEGLVADAAIWQRRKACQRALLTTLLLSQGTPMLLAGDEQGHSQQGNNNAYCQNNILTWLDWGSADRALMTFTADLIRLRQQIPALTQDQWWQSGDSNVQWLDSQGQALSDAAWEQGCQQQLQILLSQRWLVLINATDHECEMHLPEGEWEGIPPFGVSDHAERLTTWRGSAHTICVLIKRD</sequence>
<gene>
    <name evidence="1" type="primary">glgX</name>
    <name type="ordered locus">YpAngola_A4119</name>
</gene>
<organism>
    <name type="scientific">Yersinia pestis bv. Antiqua (strain Angola)</name>
    <dbReference type="NCBI Taxonomy" id="349746"/>
    <lineage>
        <taxon>Bacteria</taxon>
        <taxon>Pseudomonadati</taxon>
        <taxon>Pseudomonadota</taxon>
        <taxon>Gammaproteobacteria</taxon>
        <taxon>Enterobacterales</taxon>
        <taxon>Yersiniaceae</taxon>
        <taxon>Yersinia</taxon>
    </lineage>
</organism>
<dbReference type="EC" id="3.2.1.196" evidence="1"/>
<dbReference type="EMBL" id="CP000901">
    <property type="protein sequence ID" value="ABX88352.1"/>
    <property type="molecule type" value="Genomic_DNA"/>
</dbReference>
<dbReference type="RefSeq" id="WP_012230174.1">
    <property type="nucleotide sequence ID" value="NC_010159.1"/>
</dbReference>
<dbReference type="SMR" id="A9R5L9"/>
<dbReference type="CAZy" id="CBM48">
    <property type="family name" value="Carbohydrate-Binding Module Family 48"/>
</dbReference>
<dbReference type="CAZy" id="GH13">
    <property type="family name" value="Glycoside Hydrolase Family 13"/>
</dbReference>
<dbReference type="KEGG" id="ypg:YpAngola_A4119"/>
<dbReference type="PATRIC" id="fig|349746.12.peg.854"/>
<dbReference type="UniPathway" id="UPA00165"/>
<dbReference type="GO" id="GO:0004133">
    <property type="term" value="F:glycogen debranching enzyme activity"/>
    <property type="evidence" value="ECO:0007669"/>
    <property type="project" value="UniProtKB-UniRule"/>
</dbReference>
<dbReference type="GO" id="GO:0004553">
    <property type="term" value="F:hydrolase activity, hydrolyzing O-glycosyl compounds"/>
    <property type="evidence" value="ECO:0007669"/>
    <property type="project" value="InterPro"/>
</dbReference>
<dbReference type="GO" id="GO:0005980">
    <property type="term" value="P:glycogen catabolic process"/>
    <property type="evidence" value="ECO:0007669"/>
    <property type="project" value="UniProtKB-UniRule"/>
</dbReference>
<dbReference type="CDD" id="cd11326">
    <property type="entry name" value="AmyAc_Glg_debranch"/>
    <property type="match status" value="1"/>
</dbReference>
<dbReference type="CDD" id="cd02856">
    <property type="entry name" value="E_set_GDE_Isoamylase_N"/>
    <property type="match status" value="1"/>
</dbReference>
<dbReference type="Gene3D" id="3.20.20.80">
    <property type="entry name" value="Glycosidases"/>
    <property type="match status" value="1"/>
</dbReference>
<dbReference type="Gene3D" id="2.60.40.1180">
    <property type="entry name" value="Golgi alpha-mannosidase II"/>
    <property type="match status" value="1"/>
</dbReference>
<dbReference type="Gene3D" id="2.60.40.10">
    <property type="entry name" value="Immunoglobulins"/>
    <property type="match status" value="1"/>
</dbReference>
<dbReference type="HAMAP" id="MF_01248">
    <property type="entry name" value="GlgX"/>
    <property type="match status" value="1"/>
</dbReference>
<dbReference type="InterPro" id="IPR040784">
    <property type="entry name" value="GlgX_C"/>
</dbReference>
<dbReference type="InterPro" id="IPR044505">
    <property type="entry name" value="GlgX_Isoamylase_N_E_set"/>
</dbReference>
<dbReference type="InterPro" id="IPR006047">
    <property type="entry name" value="Glyco_hydro_13_cat_dom"/>
</dbReference>
<dbReference type="InterPro" id="IPR004193">
    <property type="entry name" value="Glyco_hydro_13_N"/>
</dbReference>
<dbReference type="InterPro" id="IPR013780">
    <property type="entry name" value="Glyco_hydro_b"/>
</dbReference>
<dbReference type="InterPro" id="IPR022844">
    <property type="entry name" value="Glycogen_debranch_bac"/>
</dbReference>
<dbReference type="InterPro" id="IPR011837">
    <property type="entry name" value="Glycogen_debranch_GlgX"/>
</dbReference>
<dbReference type="InterPro" id="IPR017853">
    <property type="entry name" value="Glycoside_hydrolase_SF"/>
</dbReference>
<dbReference type="InterPro" id="IPR013783">
    <property type="entry name" value="Ig-like_fold"/>
</dbReference>
<dbReference type="InterPro" id="IPR014756">
    <property type="entry name" value="Ig_E-set"/>
</dbReference>
<dbReference type="NCBIfam" id="TIGR02100">
    <property type="entry name" value="glgX_debranch"/>
    <property type="match status" value="1"/>
</dbReference>
<dbReference type="NCBIfam" id="NF002983">
    <property type="entry name" value="PRK03705.1"/>
    <property type="match status" value="1"/>
</dbReference>
<dbReference type="PANTHER" id="PTHR43002">
    <property type="entry name" value="GLYCOGEN DEBRANCHING ENZYME"/>
    <property type="match status" value="1"/>
</dbReference>
<dbReference type="Pfam" id="PF02922">
    <property type="entry name" value="CBM_48"/>
    <property type="match status" value="1"/>
</dbReference>
<dbReference type="Pfam" id="PF18390">
    <property type="entry name" value="GlgX_C"/>
    <property type="match status" value="1"/>
</dbReference>
<dbReference type="SMART" id="SM00642">
    <property type="entry name" value="Aamy"/>
    <property type="match status" value="1"/>
</dbReference>
<dbReference type="SUPFAM" id="SSF51445">
    <property type="entry name" value="(Trans)glycosidases"/>
    <property type="match status" value="1"/>
</dbReference>
<dbReference type="SUPFAM" id="SSF81296">
    <property type="entry name" value="E set domains"/>
    <property type="match status" value="1"/>
</dbReference>
<dbReference type="SUPFAM" id="SSF51011">
    <property type="entry name" value="Glycosyl hydrolase domain"/>
    <property type="match status" value="1"/>
</dbReference>
<reference key="1">
    <citation type="journal article" date="2010" name="J. Bacteriol.">
        <title>Genome sequence of the deep-rooted Yersinia pestis strain Angola reveals new insights into the evolution and pangenome of the plague bacterium.</title>
        <authorList>
            <person name="Eppinger M."/>
            <person name="Worsham P.L."/>
            <person name="Nikolich M.P."/>
            <person name="Riley D.R."/>
            <person name="Sebastian Y."/>
            <person name="Mou S."/>
            <person name="Achtman M."/>
            <person name="Lindler L.E."/>
            <person name="Ravel J."/>
        </authorList>
    </citation>
    <scope>NUCLEOTIDE SEQUENCE [LARGE SCALE GENOMIC DNA]</scope>
    <source>
        <strain>Angola</strain>
    </source>
</reference>
<comment type="function">
    <text evidence="1">Removes maltotriose and maltotetraose chains that are attached by 1,6-alpha-linkage to the limit dextrin main chain, generating a debranched limit dextrin.</text>
</comment>
<comment type="catalytic activity">
    <reaction evidence="1">
        <text>Hydrolysis of (1-&gt;6)-alpha-D-glucosidic linkages to branches with degrees of polymerization of three or four glucose residues in limit dextrin.</text>
        <dbReference type="EC" id="3.2.1.196"/>
    </reaction>
</comment>
<comment type="pathway">
    <text evidence="1">Glycan degradation; glycogen degradation.</text>
</comment>
<comment type="similarity">
    <text evidence="1">Belongs to the glycosyl hydrolase 13 family.</text>
</comment>
<feature type="chain" id="PRO_1000139882" description="Glycogen debranching enzyme">
    <location>
        <begin position="1"/>
        <end position="662"/>
    </location>
</feature>
<feature type="active site" description="Nucleophile" evidence="1">
    <location>
        <position position="338"/>
    </location>
</feature>
<feature type="active site" description="Proton donor" evidence="1">
    <location>
        <position position="373"/>
    </location>
</feature>
<feature type="site" description="Transition state stabilizer" evidence="1">
    <location>
        <position position="445"/>
    </location>
</feature>
<name>GLGX_YERPG</name>
<evidence type="ECO:0000255" key="1">
    <source>
        <dbReference type="HAMAP-Rule" id="MF_01248"/>
    </source>
</evidence>
<protein>
    <recommendedName>
        <fullName evidence="1">Glycogen debranching enzyme</fullName>
        <ecNumber evidence="1">3.2.1.196</ecNumber>
    </recommendedName>
    <alternativeName>
        <fullName evidence="1">Limit dextrin alpha-1,6-maltotetraose-hydrolase</fullName>
    </alternativeName>
</protein>
<keyword id="KW-0119">Carbohydrate metabolism</keyword>
<keyword id="KW-0321">Glycogen metabolism</keyword>
<keyword id="KW-0326">Glycosidase</keyword>
<keyword id="KW-0378">Hydrolase</keyword>